<evidence type="ECO:0000255" key="1">
    <source>
        <dbReference type="HAMAP-Rule" id="MF_00615"/>
    </source>
</evidence>
<sequence>MAVYRCGKCWKTFTDEQLKVLPGVRCPYCGYKIIFMVRKPTIKIVKAI</sequence>
<dbReference type="EC" id="2.7.7.6" evidence="1"/>
<dbReference type="EMBL" id="CP001404">
    <property type="protein sequence ID" value="ACP48256.1"/>
    <property type="molecule type" value="Genomic_DNA"/>
</dbReference>
<dbReference type="RefSeq" id="WP_009988725.1">
    <property type="nucleotide sequence ID" value="NC_012623.1"/>
</dbReference>
<dbReference type="SMR" id="C3NGJ6"/>
<dbReference type="KEGG" id="sin:YN1551_1150"/>
<dbReference type="HOGENOM" id="CLU_179456_2_0_2"/>
<dbReference type="Proteomes" id="UP000006818">
    <property type="component" value="Chromosome"/>
</dbReference>
<dbReference type="GO" id="GO:0005737">
    <property type="term" value="C:cytoplasm"/>
    <property type="evidence" value="ECO:0007669"/>
    <property type="project" value="UniProtKB-SubCell"/>
</dbReference>
<dbReference type="GO" id="GO:0000428">
    <property type="term" value="C:DNA-directed RNA polymerase complex"/>
    <property type="evidence" value="ECO:0007669"/>
    <property type="project" value="UniProtKB-KW"/>
</dbReference>
<dbReference type="GO" id="GO:0003677">
    <property type="term" value="F:DNA binding"/>
    <property type="evidence" value="ECO:0007669"/>
    <property type="project" value="InterPro"/>
</dbReference>
<dbReference type="GO" id="GO:0003899">
    <property type="term" value="F:DNA-directed RNA polymerase activity"/>
    <property type="evidence" value="ECO:0007669"/>
    <property type="project" value="UniProtKB-UniRule"/>
</dbReference>
<dbReference type="GO" id="GO:0008270">
    <property type="term" value="F:zinc ion binding"/>
    <property type="evidence" value="ECO:0007669"/>
    <property type="project" value="UniProtKB-UniRule"/>
</dbReference>
<dbReference type="GO" id="GO:0006351">
    <property type="term" value="P:DNA-templated transcription"/>
    <property type="evidence" value="ECO:0007669"/>
    <property type="project" value="UniProtKB-UniRule"/>
</dbReference>
<dbReference type="Gene3D" id="2.20.28.30">
    <property type="entry name" value="RNA polymerase ii, chain L"/>
    <property type="match status" value="1"/>
</dbReference>
<dbReference type="HAMAP" id="MF_00615">
    <property type="entry name" value="RNApol_arch_Rpo12"/>
    <property type="match status" value="1"/>
</dbReference>
<dbReference type="InterPro" id="IPR006591">
    <property type="entry name" value="RNAP_P/RPABC4"/>
</dbReference>
<dbReference type="InterPro" id="IPR029040">
    <property type="entry name" value="RPABC4/Spt4"/>
</dbReference>
<dbReference type="InterPro" id="IPR023464">
    <property type="entry name" value="Rpo12"/>
</dbReference>
<dbReference type="NCBIfam" id="NF001604">
    <property type="entry name" value="PRK00398.1-1"/>
    <property type="match status" value="1"/>
</dbReference>
<dbReference type="SMART" id="SM00659">
    <property type="entry name" value="RPOLCX"/>
    <property type="match status" value="1"/>
</dbReference>
<dbReference type="SUPFAM" id="SSF63393">
    <property type="entry name" value="RNA polymerase subunits"/>
    <property type="match status" value="1"/>
</dbReference>
<proteinExistence type="inferred from homology"/>
<name>RPO12_SACI1</name>
<keyword id="KW-0963">Cytoplasm</keyword>
<keyword id="KW-0240">DNA-directed RNA polymerase</keyword>
<keyword id="KW-0479">Metal-binding</keyword>
<keyword id="KW-0548">Nucleotidyltransferase</keyword>
<keyword id="KW-0804">Transcription</keyword>
<keyword id="KW-0808">Transferase</keyword>
<keyword id="KW-0862">Zinc</keyword>
<reference key="1">
    <citation type="journal article" date="2009" name="Proc. Natl. Acad. Sci. U.S.A.">
        <title>Biogeography of the Sulfolobus islandicus pan-genome.</title>
        <authorList>
            <person name="Reno M.L."/>
            <person name="Held N.L."/>
            <person name="Fields C.J."/>
            <person name="Burke P.V."/>
            <person name="Whitaker R.J."/>
        </authorList>
    </citation>
    <scope>NUCLEOTIDE SEQUENCE [LARGE SCALE GENOMIC DNA]</scope>
    <source>
        <strain>Y.N.15.51 / Yellowstone #2</strain>
    </source>
</reference>
<protein>
    <recommendedName>
        <fullName evidence="1">DNA-directed RNA polymerase subunit Rpo12</fullName>
        <ecNumber evidence="1">2.7.7.6</ecNumber>
    </recommendedName>
    <alternativeName>
        <fullName evidence="1">DNA-directed RNA polymerase subunit P</fullName>
    </alternativeName>
</protein>
<comment type="function">
    <text evidence="1">DNA-dependent RNA polymerase (RNAP) catalyzes the transcription of DNA into RNA using the four ribonucleoside triphosphates as substrates.</text>
</comment>
<comment type="catalytic activity">
    <reaction evidence="1">
        <text>RNA(n) + a ribonucleoside 5'-triphosphate = RNA(n+1) + diphosphate</text>
        <dbReference type="Rhea" id="RHEA:21248"/>
        <dbReference type="Rhea" id="RHEA-COMP:14527"/>
        <dbReference type="Rhea" id="RHEA-COMP:17342"/>
        <dbReference type="ChEBI" id="CHEBI:33019"/>
        <dbReference type="ChEBI" id="CHEBI:61557"/>
        <dbReference type="ChEBI" id="CHEBI:140395"/>
        <dbReference type="EC" id="2.7.7.6"/>
    </reaction>
</comment>
<comment type="cofactor">
    <cofactor evidence="1">
        <name>Zn(2+)</name>
        <dbReference type="ChEBI" id="CHEBI:29105"/>
    </cofactor>
    <text evidence="1">Binds 1 zinc ion.</text>
</comment>
<comment type="subunit">
    <text evidence="1">Part of the RNA polymerase complex.</text>
</comment>
<comment type="subcellular location">
    <subcellularLocation>
        <location evidence="1">Cytoplasm</location>
    </subcellularLocation>
</comment>
<comment type="similarity">
    <text evidence="1">Belongs to the archaeal Rpo12/eukaryotic RPC10 RNA polymerase subunit family.</text>
</comment>
<gene>
    <name evidence="1" type="primary">rpo12</name>
    <name evidence="1" type="synonym">rpoP</name>
    <name type="ordered locus">YN1551_1150</name>
</gene>
<feature type="chain" id="PRO_1000212277" description="DNA-directed RNA polymerase subunit Rpo12">
    <location>
        <begin position="1"/>
        <end position="48"/>
    </location>
</feature>
<feature type="binding site" evidence="1">
    <location>
        <position position="9"/>
    </location>
    <ligand>
        <name>Zn(2+)</name>
        <dbReference type="ChEBI" id="CHEBI:29105"/>
    </ligand>
</feature>
<feature type="binding site" evidence="1">
    <location>
        <position position="26"/>
    </location>
    <ligand>
        <name>Zn(2+)</name>
        <dbReference type="ChEBI" id="CHEBI:29105"/>
    </ligand>
</feature>
<feature type="binding site" evidence="1">
    <location>
        <position position="29"/>
    </location>
    <ligand>
        <name>Zn(2+)</name>
        <dbReference type="ChEBI" id="CHEBI:29105"/>
    </ligand>
</feature>
<accession>C3NGJ6</accession>
<organism>
    <name type="scientific">Saccharolobus islandicus (strain Y.N.15.51 / Yellowstone #2)</name>
    <name type="common">Sulfolobus islandicus</name>
    <dbReference type="NCBI Taxonomy" id="419942"/>
    <lineage>
        <taxon>Archaea</taxon>
        <taxon>Thermoproteota</taxon>
        <taxon>Thermoprotei</taxon>
        <taxon>Sulfolobales</taxon>
        <taxon>Sulfolobaceae</taxon>
        <taxon>Saccharolobus</taxon>
    </lineage>
</organism>